<organism>
    <name type="scientific">Haemophilus influenzae (strain ATCC 51907 / DSM 11121 / KW20 / Rd)</name>
    <dbReference type="NCBI Taxonomy" id="71421"/>
    <lineage>
        <taxon>Bacteria</taxon>
        <taxon>Pseudomonadati</taxon>
        <taxon>Pseudomonadota</taxon>
        <taxon>Gammaproteobacteria</taxon>
        <taxon>Pasteurellales</taxon>
        <taxon>Pasteurellaceae</taxon>
        <taxon>Haemophilus</taxon>
    </lineage>
</organism>
<proteinExistence type="inferred from homology"/>
<name>GALE_HAEIN</name>
<dbReference type="EC" id="5.1.3.2"/>
<dbReference type="EMBL" id="X57315">
    <property type="protein sequence ID" value="CAA40568.1"/>
    <property type="molecule type" value="Genomic_DNA"/>
</dbReference>
<dbReference type="EMBL" id="L42023">
    <property type="protein sequence ID" value="AAC22012.1"/>
    <property type="molecule type" value="Genomic_DNA"/>
</dbReference>
<dbReference type="PIR" id="A64063">
    <property type="entry name" value="A64063"/>
</dbReference>
<dbReference type="RefSeq" id="NP_438515.1">
    <property type="nucleotide sequence ID" value="NC_000907.1"/>
</dbReference>
<dbReference type="SMR" id="P24325"/>
<dbReference type="STRING" id="71421.HI_0351"/>
<dbReference type="EnsemblBacteria" id="AAC22012">
    <property type="protein sequence ID" value="AAC22012"/>
    <property type="gene ID" value="HI_0351"/>
</dbReference>
<dbReference type="KEGG" id="hin:HI_0351"/>
<dbReference type="PATRIC" id="fig|71421.8.peg.370"/>
<dbReference type="eggNOG" id="COG1087">
    <property type="taxonomic scope" value="Bacteria"/>
</dbReference>
<dbReference type="HOGENOM" id="CLU_007383_1_10_6"/>
<dbReference type="OrthoDB" id="9803010at2"/>
<dbReference type="PhylomeDB" id="P24325"/>
<dbReference type="BioCyc" id="HINF71421:G1GJ1-367-MONOMER"/>
<dbReference type="UniPathway" id="UPA00214"/>
<dbReference type="PHI-base" id="PHI:9264"/>
<dbReference type="Proteomes" id="UP000000579">
    <property type="component" value="Chromosome"/>
</dbReference>
<dbReference type="GO" id="GO:0005829">
    <property type="term" value="C:cytosol"/>
    <property type="evidence" value="ECO:0000318"/>
    <property type="project" value="GO_Central"/>
</dbReference>
<dbReference type="GO" id="GO:0003978">
    <property type="term" value="F:UDP-glucose 4-epimerase activity"/>
    <property type="evidence" value="ECO:0000318"/>
    <property type="project" value="GO_Central"/>
</dbReference>
<dbReference type="GO" id="GO:0006012">
    <property type="term" value="P:galactose metabolic process"/>
    <property type="evidence" value="ECO:0007669"/>
    <property type="project" value="UniProtKB-UniPathway"/>
</dbReference>
<dbReference type="GO" id="GO:0005996">
    <property type="term" value="P:monosaccharide metabolic process"/>
    <property type="evidence" value="ECO:0000318"/>
    <property type="project" value="GO_Central"/>
</dbReference>
<dbReference type="CDD" id="cd05247">
    <property type="entry name" value="UDP_G4E_1_SDR_e"/>
    <property type="match status" value="1"/>
</dbReference>
<dbReference type="Gene3D" id="3.40.50.720">
    <property type="entry name" value="NAD(P)-binding Rossmann-like Domain"/>
    <property type="match status" value="1"/>
</dbReference>
<dbReference type="Gene3D" id="3.90.25.10">
    <property type="entry name" value="UDP-galactose 4-epimerase, domain 1"/>
    <property type="match status" value="1"/>
</dbReference>
<dbReference type="InterPro" id="IPR001509">
    <property type="entry name" value="Epimerase_deHydtase"/>
</dbReference>
<dbReference type="InterPro" id="IPR036291">
    <property type="entry name" value="NAD(P)-bd_dom_sf"/>
</dbReference>
<dbReference type="InterPro" id="IPR005886">
    <property type="entry name" value="UDP_G4E"/>
</dbReference>
<dbReference type="NCBIfam" id="TIGR01179">
    <property type="entry name" value="galE"/>
    <property type="match status" value="1"/>
</dbReference>
<dbReference type="NCBIfam" id="NF007956">
    <property type="entry name" value="PRK10675.1"/>
    <property type="match status" value="1"/>
</dbReference>
<dbReference type="PANTHER" id="PTHR43725">
    <property type="entry name" value="UDP-GLUCOSE 4-EPIMERASE"/>
    <property type="match status" value="1"/>
</dbReference>
<dbReference type="PANTHER" id="PTHR43725:SF47">
    <property type="entry name" value="UDP-GLUCOSE 4-EPIMERASE"/>
    <property type="match status" value="1"/>
</dbReference>
<dbReference type="Pfam" id="PF01370">
    <property type="entry name" value="Epimerase"/>
    <property type="match status" value="1"/>
</dbReference>
<dbReference type="SUPFAM" id="SSF51735">
    <property type="entry name" value="NAD(P)-binding Rossmann-fold domains"/>
    <property type="match status" value="1"/>
</dbReference>
<comment type="function">
    <text evidence="2">Involved in the metabolism of galactose. Catalyzes the conversion of UDP-galactose (UDP-Gal) to UDP-glucose (UDP-Glc) through a mechanism involving the transient reduction of NAD. By controlling the internal galactose concentration, it may be linked to the biosynthesis of lipopolysaccharide surface molecules, which are important for the pathogenesis of H.influenzae.</text>
</comment>
<comment type="catalytic activity">
    <reaction>
        <text>UDP-alpha-D-glucose = UDP-alpha-D-galactose</text>
        <dbReference type="Rhea" id="RHEA:22168"/>
        <dbReference type="ChEBI" id="CHEBI:58885"/>
        <dbReference type="ChEBI" id="CHEBI:66914"/>
        <dbReference type="EC" id="5.1.3.2"/>
    </reaction>
</comment>
<comment type="cofactor">
    <cofactor evidence="1">
        <name>NAD(+)</name>
        <dbReference type="ChEBI" id="CHEBI:57540"/>
    </cofactor>
</comment>
<comment type="pathway">
    <text>Carbohydrate metabolism; galactose metabolism.</text>
</comment>
<comment type="subunit">
    <text evidence="1">Homodimer.</text>
</comment>
<comment type="similarity">
    <text evidence="3">Belongs to the NAD(P)-dependent epimerase/dehydratase family.</text>
</comment>
<sequence>MAILVTGGAGYIGSHTVVELLNVGKEVVVLDNLCNSSPKSLERVKQITGKEAKFYEGDILDRALLQKIFAENEINSVIHFAGLKAVGESVQKPTEYYMNNVAGTLVLIQEMKKAGVWNFVFSSSATVYGDPKIIPITEDCEVGGTTNPYGTSKYMVEQILRDTAKAEPKFSMTILRYFNPVGAHESGLIGEDPNGIPNNLLPYISQVAIGKLAQLSVFGSDYDTHDGTGVRDYIHVVDLAVGHLKALQRHENDAGLHIYNLGTGHGYSVLDMVKAFEKANNITIAYKLVERRSGDIATCYSDPSLAAKELGWVAERGLEKMMQDTWNWQKNNPKGYRD</sequence>
<protein>
    <recommendedName>
        <fullName>UDP-glucose 4-epimerase</fullName>
        <ecNumber>5.1.3.2</ecNumber>
    </recommendedName>
    <alternativeName>
        <fullName>Galactowaldenase</fullName>
    </alternativeName>
    <alternativeName>
        <fullName>UDP-galactose 4-epimerase</fullName>
    </alternativeName>
</protein>
<reference key="1">
    <citation type="journal article" date="1991" name="Mol. Microbiol.">
        <title>Molecular analysis of a complex locus from Haemophilus influenzae involved in phase-variable lipopolysaccharide biosynthesis.</title>
        <authorList>
            <person name="Maskell D.J."/>
            <person name="Szabo M.J."/>
            <person name="Butler P.D."/>
            <person name="Williams A.E."/>
            <person name="Moxon E.R."/>
        </authorList>
    </citation>
    <scope>NUCLEOTIDE SEQUENCE [GENOMIC DNA]</scope>
    <scope>FUNCTION</scope>
    <source>
        <strain>RM 7004 / Serotype B</strain>
    </source>
</reference>
<reference key="2">
    <citation type="journal article" date="1995" name="Science">
        <title>Whole-genome random sequencing and assembly of Haemophilus influenzae Rd.</title>
        <authorList>
            <person name="Fleischmann R.D."/>
            <person name="Adams M.D."/>
            <person name="White O."/>
            <person name="Clayton R.A."/>
            <person name="Kirkness E.F."/>
            <person name="Kerlavage A.R."/>
            <person name="Bult C.J."/>
            <person name="Tomb J.-F."/>
            <person name="Dougherty B.A."/>
            <person name="Merrick J.M."/>
            <person name="McKenney K."/>
            <person name="Sutton G.G."/>
            <person name="FitzHugh W."/>
            <person name="Fields C.A."/>
            <person name="Gocayne J.D."/>
            <person name="Scott J.D."/>
            <person name="Shirley R."/>
            <person name="Liu L.-I."/>
            <person name="Glodek A."/>
            <person name="Kelley J.M."/>
            <person name="Weidman J.F."/>
            <person name="Phillips C.A."/>
            <person name="Spriggs T."/>
            <person name="Hedblom E."/>
            <person name="Cotton M.D."/>
            <person name="Utterback T.R."/>
            <person name="Hanna M.C."/>
            <person name="Nguyen D.T."/>
            <person name="Saudek D.M."/>
            <person name="Brandon R.C."/>
            <person name="Fine L.D."/>
            <person name="Fritchman J.L."/>
            <person name="Fuhrmann J.L."/>
            <person name="Geoghagen N.S.M."/>
            <person name="Gnehm C.L."/>
            <person name="McDonald L.A."/>
            <person name="Small K.V."/>
            <person name="Fraser C.M."/>
            <person name="Smith H.O."/>
            <person name="Venter J.C."/>
        </authorList>
    </citation>
    <scope>NUCLEOTIDE SEQUENCE [LARGE SCALE GENOMIC DNA]</scope>
    <source>
        <strain>ATCC 51907 / DSM 11121 / KW20 / Rd</strain>
    </source>
</reference>
<feature type="chain" id="PRO_0000183205" description="UDP-glucose 4-epimerase">
    <location>
        <begin position="1"/>
        <end position="338"/>
    </location>
</feature>
<feature type="active site" description="Proton acceptor" evidence="1">
    <location>
        <position position="149"/>
    </location>
</feature>
<feature type="binding site" evidence="1">
    <location>
        <begin position="11"/>
        <end position="12"/>
    </location>
    <ligand>
        <name>NAD(+)</name>
        <dbReference type="ChEBI" id="CHEBI:57540"/>
    </ligand>
</feature>
<feature type="binding site" evidence="1">
    <location>
        <begin position="31"/>
        <end position="36"/>
    </location>
    <ligand>
        <name>NAD(+)</name>
        <dbReference type="ChEBI" id="CHEBI:57540"/>
    </ligand>
</feature>
<feature type="binding site" evidence="1">
    <location>
        <begin position="58"/>
        <end position="59"/>
    </location>
    <ligand>
        <name>NAD(+)</name>
        <dbReference type="ChEBI" id="CHEBI:57540"/>
    </ligand>
</feature>
<feature type="binding site" evidence="1">
    <location>
        <begin position="80"/>
        <end position="84"/>
    </location>
    <ligand>
        <name>NAD(+)</name>
        <dbReference type="ChEBI" id="CHEBI:57540"/>
    </ligand>
</feature>
<feature type="binding site" evidence="1">
    <location>
        <position position="99"/>
    </location>
    <ligand>
        <name>NAD(+)</name>
        <dbReference type="ChEBI" id="CHEBI:57540"/>
    </ligand>
</feature>
<feature type="binding site" evidence="1">
    <location>
        <position position="124"/>
    </location>
    <ligand>
        <name>NAD(+)</name>
        <dbReference type="ChEBI" id="CHEBI:57540"/>
    </ligand>
</feature>
<feature type="binding site" evidence="1">
    <location>
        <position position="124"/>
    </location>
    <ligand>
        <name>substrate</name>
    </ligand>
</feature>
<feature type="binding site" evidence="1">
    <location>
        <position position="149"/>
    </location>
    <ligand>
        <name>NAD(+)</name>
        <dbReference type="ChEBI" id="CHEBI:57540"/>
    </ligand>
</feature>
<feature type="binding site" evidence="1">
    <location>
        <position position="149"/>
    </location>
    <ligand>
        <name>substrate</name>
    </ligand>
</feature>
<feature type="binding site" evidence="1">
    <location>
        <position position="153"/>
    </location>
    <ligand>
        <name>NAD(+)</name>
        <dbReference type="ChEBI" id="CHEBI:57540"/>
    </ligand>
</feature>
<feature type="binding site" evidence="1">
    <location>
        <position position="178"/>
    </location>
    <ligand>
        <name>NAD(+)</name>
        <dbReference type="ChEBI" id="CHEBI:57540"/>
    </ligand>
</feature>
<feature type="binding site" evidence="1">
    <location>
        <position position="179"/>
    </location>
    <ligand>
        <name>substrate</name>
    </ligand>
</feature>
<feature type="binding site" evidence="1">
    <location>
        <begin position="199"/>
        <end position="200"/>
    </location>
    <ligand>
        <name>substrate</name>
    </ligand>
</feature>
<feature type="binding site" evidence="1">
    <location>
        <begin position="216"/>
        <end position="218"/>
    </location>
    <ligand>
        <name>substrate</name>
    </ligand>
</feature>
<feature type="binding site" evidence="1">
    <location>
        <position position="231"/>
    </location>
    <ligand>
        <name>substrate</name>
    </ligand>
</feature>
<feature type="binding site" evidence="1">
    <location>
        <begin position="292"/>
        <end position="295"/>
    </location>
    <ligand>
        <name>substrate</name>
    </ligand>
</feature>
<feature type="sequence variant" description="In strain: RM 7004.">
    <original>A</original>
    <variation>P</variation>
    <location>
        <position position="285"/>
    </location>
</feature>
<feature type="sequence variant" description="In strain: RM 7004.">
    <original>P</original>
    <variation>S</variation>
    <location>
        <position position="333"/>
    </location>
</feature>
<evidence type="ECO:0000250" key="1"/>
<evidence type="ECO:0000269" key="2">
    <source>
    </source>
</evidence>
<evidence type="ECO:0000305" key="3"/>
<accession>P24325</accession>
<keyword id="KW-0119">Carbohydrate metabolism</keyword>
<keyword id="KW-0299">Galactose metabolism</keyword>
<keyword id="KW-0413">Isomerase</keyword>
<keyword id="KW-0520">NAD</keyword>
<keyword id="KW-1185">Reference proteome</keyword>
<gene>
    <name type="primary">galE</name>
    <name type="ordered locus">HI_0351</name>
</gene>